<feature type="chain" id="PRO_1000133624" description="Succinylglutamate desuccinylase">
    <location>
        <begin position="1"/>
        <end position="342"/>
    </location>
</feature>
<feature type="active site" evidence="1">
    <location>
        <position position="222"/>
    </location>
</feature>
<feature type="binding site" evidence="1">
    <location>
        <position position="64"/>
    </location>
    <ligand>
        <name>Zn(2+)</name>
        <dbReference type="ChEBI" id="CHEBI:29105"/>
    </ligand>
</feature>
<feature type="binding site" evidence="1">
    <location>
        <position position="67"/>
    </location>
    <ligand>
        <name>Zn(2+)</name>
        <dbReference type="ChEBI" id="CHEBI:29105"/>
    </ligand>
</feature>
<feature type="binding site" evidence="1">
    <location>
        <position position="159"/>
    </location>
    <ligand>
        <name>Zn(2+)</name>
        <dbReference type="ChEBI" id="CHEBI:29105"/>
    </ligand>
</feature>
<evidence type="ECO:0000255" key="1">
    <source>
        <dbReference type="HAMAP-Rule" id="MF_00767"/>
    </source>
</evidence>
<protein>
    <recommendedName>
        <fullName evidence="1">Succinylglutamate desuccinylase</fullName>
        <ecNumber evidence="1">3.5.1.96</ecNumber>
    </recommendedName>
</protein>
<gene>
    <name evidence="1" type="primary">astE</name>
    <name type="ordered locus">Bcenmc03_1162</name>
</gene>
<accession>B1JYT7</accession>
<sequence>MPAAALLDDFLAFTLAGEAPAERDGACAGGAVRWQWLGDGLLAFEPAAADAAARASVLVSAGVHGDETAPIELLSMLVRDFAAGALPLACRLLVVLGNVPAMRAGERYLDDDLNRLFSGRHAQVPASREAPRAAQLEAAASAFFAAAPAGSARWHIDMHTAIRASVFEQFALLPHTGTPPTRAMVEWLGDARIAAVLLHTAKGNTYSHFTAEHCGALACTLELGKVRPFGQNDLTRFAPADRAVRKLVSGERAEGGATLPRVFTVIDQITKQSDALELFVAADVANFTAFARGTVLAQDGDYRYTVKHDEERIVFPNPTVKPGLRAGLLVVDTTRDTLAALV</sequence>
<keyword id="KW-0056">Arginine metabolism</keyword>
<keyword id="KW-0378">Hydrolase</keyword>
<keyword id="KW-0479">Metal-binding</keyword>
<keyword id="KW-0862">Zinc</keyword>
<comment type="function">
    <text evidence="1">Transforms N(2)-succinylglutamate into succinate and glutamate.</text>
</comment>
<comment type="catalytic activity">
    <reaction evidence="1">
        <text>N-succinyl-L-glutamate + H2O = L-glutamate + succinate</text>
        <dbReference type="Rhea" id="RHEA:15169"/>
        <dbReference type="ChEBI" id="CHEBI:15377"/>
        <dbReference type="ChEBI" id="CHEBI:29985"/>
        <dbReference type="ChEBI" id="CHEBI:30031"/>
        <dbReference type="ChEBI" id="CHEBI:58763"/>
        <dbReference type="EC" id="3.5.1.96"/>
    </reaction>
</comment>
<comment type="cofactor">
    <cofactor evidence="1">
        <name>Zn(2+)</name>
        <dbReference type="ChEBI" id="CHEBI:29105"/>
    </cofactor>
    <text evidence="1">Binds 1 zinc ion per subunit.</text>
</comment>
<comment type="pathway">
    <text evidence="1">Amino-acid degradation; L-arginine degradation via AST pathway; L-glutamate and succinate from L-arginine: step 5/5.</text>
</comment>
<comment type="similarity">
    <text evidence="1">Belongs to the AspA/AstE family. Succinylglutamate desuccinylase subfamily.</text>
</comment>
<dbReference type="EC" id="3.5.1.96" evidence="1"/>
<dbReference type="EMBL" id="CP000958">
    <property type="protein sequence ID" value="ACA90337.1"/>
    <property type="molecule type" value="Genomic_DNA"/>
</dbReference>
<dbReference type="SMR" id="B1JYT7"/>
<dbReference type="KEGG" id="bcm:Bcenmc03_1162"/>
<dbReference type="HOGENOM" id="CLU_071608_0_0_4"/>
<dbReference type="UniPathway" id="UPA00185">
    <property type="reaction ID" value="UER00283"/>
</dbReference>
<dbReference type="Proteomes" id="UP000002169">
    <property type="component" value="Chromosome 1"/>
</dbReference>
<dbReference type="GO" id="GO:0016788">
    <property type="term" value="F:hydrolase activity, acting on ester bonds"/>
    <property type="evidence" value="ECO:0007669"/>
    <property type="project" value="UniProtKB-UniRule"/>
</dbReference>
<dbReference type="GO" id="GO:0009017">
    <property type="term" value="F:succinylglutamate desuccinylase activity"/>
    <property type="evidence" value="ECO:0007669"/>
    <property type="project" value="UniProtKB-EC"/>
</dbReference>
<dbReference type="GO" id="GO:0008270">
    <property type="term" value="F:zinc ion binding"/>
    <property type="evidence" value="ECO:0007669"/>
    <property type="project" value="UniProtKB-UniRule"/>
</dbReference>
<dbReference type="GO" id="GO:0019544">
    <property type="term" value="P:arginine catabolic process to glutamate"/>
    <property type="evidence" value="ECO:0007669"/>
    <property type="project" value="UniProtKB-UniRule"/>
</dbReference>
<dbReference type="GO" id="GO:0019545">
    <property type="term" value="P:arginine catabolic process to succinate"/>
    <property type="evidence" value="ECO:0007669"/>
    <property type="project" value="UniProtKB-UniRule"/>
</dbReference>
<dbReference type="CDD" id="cd03855">
    <property type="entry name" value="M14_ASTE"/>
    <property type="match status" value="1"/>
</dbReference>
<dbReference type="Gene3D" id="3.40.630.10">
    <property type="entry name" value="Zn peptidases"/>
    <property type="match status" value="1"/>
</dbReference>
<dbReference type="HAMAP" id="MF_00767">
    <property type="entry name" value="Arg_catab_AstE"/>
    <property type="match status" value="1"/>
</dbReference>
<dbReference type="InterPro" id="IPR050178">
    <property type="entry name" value="AspA/AstE_fam"/>
</dbReference>
<dbReference type="InterPro" id="IPR055438">
    <property type="entry name" value="AstE_AspA_cat"/>
</dbReference>
<dbReference type="InterPro" id="IPR007036">
    <property type="entry name" value="Aste_AspA_hybrid_dom"/>
</dbReference>
<dbReference type="InterPro" id="IPR016681">
    <property type="entry name" value="SuccinylGlu_desuccinylase"/>
</dbReference>
<dbReference type="NCBIfam" id="TIGR03242">
    <property type="entry name" value="arg_catab_astE"/>
    <property type="match status" value="1"/>
</dbReference>
<dbReference type="NCBIfam" id="NF003706">
    <property type="entry name" value="PRK05324.1"/>
    <property type="match status" value="1"/>
</dbReference>
<dbReference type="PANTHER" id="PTHR15162">
    <property type="entry name" value="ASPARTOACYLASE"/>
    <property type="match status" value="1"/>
</dbReference>
<dbReference type="PANTHER" id="PTHR15162:SF7">
    <property type="entry name" value="SUCCINYLGLUTAMATE DESUCCINYLASE"/>
    <property type="match status" value="1"/>
</dbReference>
<dbReference type="Pfam" id="PF24827">
    <property type="entry name" value="AstE_AspA_cat"/>
    <property type="match status" value="1"/>
</dbReference>
<dbReference type="Pfam" id="PF04952">
    <property type="entry name" value="AstE_AspA_hybrid"/>
    <property type="match status" value="1"/>
</dbReference>
<dbReference type="PIRSF" id="PIRSF017020">
    <property type="entry name" value="AstE"/>
    <property type="match status" value="1"/>
</dbReference>
<dbReference type="SUPFAM" id="SSF53187">
    <property type="entry name" value="Zn-dependent exopeptidases"/>
    <property type="match status" value="1"/>
</dbReference>
<organism>
    <name type="scientific">Burkholderia orbicola (strain MC0-3)</name>
    <dbReference type="NCBI Taxonomy" id="406425"/>
    <lineage>
        <taxon>Bacteria</taxon>
        <taxon>Pseudomonadati</taxon>
        <taxon>Pseudomonadota</taxon>
        <taxon>Betaproteobacteria</taxon>
        <taxon>Burkholderiales</taxon>
        <taxon>Burkholderiaceae</taxon>
        <taxon>Burkholderia</taxon>
        <taxon>Burkholderia cepacia complex</taxon>
        <taxon>Burkholderia orbicola</taxon>
    </lineage>
</organism>
<reference key="1">
    <citation type="submission" date="2008-02" db="EMBL/GenBank/DDBJ databases">
        <title>Complete sequence of chromosome 1 of Burkholderia cenocepacia MC0-3.</title>
        <authorList>
            <person name="Copeland A."/>
            <person name="Lucas S."/>
            <person name="Lapidus A."/>
            <person name="Barry K."/>
            <person name="Bruce D."/>
            <person name="Goodwin L."/>
            <person name="Glavina del Rio T."/>
            <person name="Dalin E."/>
            <person name="Tice H."/>
            <person name="Pitluck S."/>
            <person name="Chain P."/>
            <person name="Malfatti S."/>
            <person name="Shin M."/>
            <person name="Vergez L."/>
            <person name="Schmutz J."/>
            <person name="Larimer F."/>
            <person name="Land M."/>
            <person name="Hauser L."/>
            <person name="Kyrpides N."/>
            <person name="Mikhailova N."/>
            <person name="Tiedje J."/>
            <person name="Richardson P."/>
        </authorList>
    </citation>
    <scope>NUCLEOTIDE SEQUENCE [LARGE SCALE GENOMIC DNA]</scope>
    <source>
        <strain>MC0-3</strain>
    </source>
</reference>
<proteinExistence type="inferred from homology"/>
<name>ASTE_BURO0</name>